<protein>
    <recommendedName>
        <fullName evidence="1">Cobyric acid synthase</fullName>
    </recommendedName>
</protein>
<feature type="chain" id="PRO_1000201966" description="Cobyric acid synthase">
    <location>
        <begin position="1"/>
        <end position="493"/>
    </location>
</feature>
<feature type="domain" description="GATase cobBQ-type" evidence="1">
    <location>
        <begin position="246"/>
        <end position="440"/>
    </location>
</feature>
<feature type="active site" description="Nucleophile" evidence="1">
    <location>
        <position position="326"/>
    </location>
</feature>
<feature type="active site" evidence="1">
    <location>
        <position position="432"/>
    </location>
</feature>
<reference key="1">
    <citation type="submission" date="2008-05" db="EMBL/GenBank/DDBJ databases">
        <title>Genome sequence of Clostridium botulinum Ba4 strain 657.</title>
        <authorList>
            <person name="Shrivastava S."/>
            <person name="Brown J.L."/>
            <person name="Bruce D."/>
            <person name="Detter C."/>
            <person name="Munk C."/>
            <person name="Smith L.A."/>
            <person name="Smith T.J."/>
            <person name="Sutton G."/>
            <person name="Brettin T.S."/>
        </authorList>
    </citation>
    <scope>NUCLEOTIDE SEQUENCE [LARGE SCALE GENOMIC DNA]</scope>
    <source>
        <strain>657 / Type Ba4</strain>
    </source>
</reference>
<name>COBQ_CLOB6</name>
<proteinExistence type="inferred from homology"/>
<evidence type="ECO:0000255" key="1">
    <source>
        <dbReference type="HAMAP-Rule" id="MF_00028"/>
    </source>
</evidence>
<organism>
    <name type="scientific">Clostridium botulinum (strain 657 / Type Ba4)</name>
    <dbReference type="NCBI Taxonomy" id="515621"/>
    <lineage>
        <taxon>Bacteria</taxon>
        <taxon>Bacillati</taxon>
        <taxon>Bacillota</taxon>
        <taxon>Clostridia</taxon>
        <taxon>Eubacteriales</taxon>
        <taxon>Clostridiaceae</taxon>
        <taxon>Clostridium</taxon>
    </lineage>
</organism>
<keyword id="KW-0169">Cobalamin biosynthesis</keyword>
<keyword id="KW-0315">Glutamine amidotransferase</keyword>
<sequence length="493" mass="55310">MAKIMIQGTASSVGKSLIVAALCRIFKQDGYSVCPFKSQNMSLNSYITLDGKEMGRAQVLQAYAAGLEPEVYMNPILLKPTSDKKSQIIVNGKVYGNSTAMEYHNLKIKFKGMLKEQFKKLEEDFDIVVMEGAGSPAEINLRDRDIVNMGMAEIVDAPVLLVGDIDKGGVFASLAGTMLLLNEGEKERVKGTIINKFRGDVEILNPGLDMLEDIIHIPCLGVVPYTRLQLEDEDGAVEFNKKAYAPIDIAVIKMPHISNFTDLDALKSEEDVSIRFITSKEEFKEPDLLVIPGSKNTIEDLLYLRKCGLEESIKEYSKDGKIIGICGGYQVLGSKIKDPYKVETDLGEIEGLNLLDMETTFEKEKITTRVSAKLINEEIENIVYGYEIHMGISEYSENVKPLFKIYDKNGEKVDYFDGAINEKGNVMGTYIHGVFDGIVFREKIINELRVKKGLKKKKSQVYEHMREKELDKLADIVRQSLDMEKIYSIIGMK</sequence>
<gene>
    <name evidence="1" type="primary">cobQ</name>
    <name type="ordered locus">CLJ_B0964</name>
</gene>
<dbReference type="EMBL" id="CP001083">
    <property type="protein sequence ID" value="ACQ53069.1"/>
    <property type="molecule type" value="Genomic_DNA"/>
</dbReference>
<dbReference type="RefSeq" id="WP_012720839.1">
    <property type="nucleotide sequence ID" value="NC_012658.1"/>
</dbReference>
<dbReference type="SMR" id="C3L2K4"/>
<dbReference type="KEGG" id="cbi:CLJ_B0964"/>
<dbReference type="HOGENOM" id="CLU_019250_2_2_9"/>
<dbReference type="UniPathway" id="UPA00148"/>
<dbReference type="Proteomes" id="UP000002333">
    <property type="component" value="Chromosome"/>
</dbReference>
<dbReference type="GO" id="GO:0015420">
    <property type="term" value="F:ABC-type vitamin B12 transporter activity"/>
    <property type="evidence" value="ECO:0007669"/>
    <property type="project" value="UniProtKB-UniRule"/>
</dbReference>
<dbReference type="GO" id="GO:0003824">
    <property type="term" value="F:catalytic activity"/>
    <property type="evidence" value="ECO:0007669"/>
    <property type="project" value="InterPro"/>
</dbReference>
<dbReference type="GO" id="GO:0009236">
    <property type="term" value="P:cobalamin biosynthetic process"/>
    <property type="evidence" value="ECO:0007669"/>
    <property type="project" value="UniProtKB-UniRule"/>
</dbReference>
<dbReference type="CDD" id="cd05389">
    <property type="entry name" value="CobQ_N"/>
    <property type="match status" value="1"/>
</dbReference>
<dbReference type="CDD" id="cd01750">
    <property type="entry name" value="GATase1_CobQ"/>
    <property type="match status" value="1"/>
</dbReference>
<dbReference type="Gene3D" id="3.40.50.880">
    <property type="match status" value="1"/>
</dbReference>
<dbReference type="Gene3D" id="3.40.50.300">
    <property type="entry name" value="P-loop containing nucleotide triphosphate hydrolases"/>
    <property type="match status" value="1"/>
</dbReference>
<dbReference type="HAMAP" id="MF_00028">
    <property type="entry name" value="CobQ"/>
    <property type="match status" value="1"/>
</dbReference>
<dbReference type="InterPro" id="IPR029062">
    <property type="entry name" value="Class_I_gatase-like"/>
</dbReference>
<dbReference type="InterPro" id="IPR002586">
    <property type="entry name" value="CobQ/CobB/MinD/ParA_Nub-bd_dom"/>
</dbReference>
<dbReference type="InterPro" id="IPR033949">
    <property type="entry name" value="CobQ_GATase1"/>
</dbReference>
<dbReference type="InterPro" id="IPR047045">
    <property type="entry name" value="CobQ_N"/>
</dbReference>
<dbReference type="InterPro" id="IPR004459">
    <property type="entry name" value="CobQ_synth"/>
</dbReference>
<dbReference type="InterPro" id="IPR011698">
    <property type="entry name" value="GATase_3"/>
</dbReference>
<dbReference type="InterPro" id="IPR027417">
    <property type="entry name" value="P-loop_NTPase"/>
</dbReference>
<dbReference type="NCBIfam" id="TIGR00313">
    <property type="entry name" value="cobQ"/>
    <property type="match status" value="1"/>
</dbReference>
<dbReference type="NCBIfam" id="NF001989">
    <property type="entry name" value="PRK00784.1"/>
    <property type="match status" value="1"/>
</dbReference>
<dbReference type="PANTHER" id="PTHR21343:SF1">
    <property type="entry name" value="COBYRIC ACID SYNTHASE"/>
    <property type="match status" value="1"/>
</dbReference>
<dbReference type="PANTHER" id="PTHR21343">
    <property type="entry name" value="DETHIOBIOTIN SYNTHETASE"/>
    <property type="match status" value="1"/>
</dbReference>
<dbReference type="Pfam" id="PF01656">
    <property type="entry name" value="CbiA"/>
    <property type="match status" value="1"/>
</dbReference>
<dbReference type="Pfam" id="PF07685">
    <property type="entry name" value="GATase_3"/>
    <property type="match status" value="1"/>
</dbReference>
<dbReference type="SUPFAM" id="SSF52317">
    <property type="entry name" value="Class I glutamine amidotransferase-like"/>
    <property type="match status" value="1"/>
</dbReference>
<dbReference type="SUPFAM" id="SSF52540">
    <property type="entry name" value="P-loop containing nucleoside triphosphate hydrolases"/>
    <property type="match status" value="1"/>
</dbReference>
<dbReference type="PROSITE" id="PS51274">
    <property type="entry name" value="GATASE_COBBQ"/>
    <property type="match status" value="1"/>
</dbReference>
<accession>C3L2K4</accession>
<comment type="function">
    <text evidence="1">Catalyzes amidations at positions B, D, E, and G on adenosylcobyrinic A,C-diamide. NH(2) groups are provided by glutamine, and one molecule of ATP is hydrogenolyzed for each amidation.</text>
</comment>
<comment type="pathway">
    <text evidence="1">Cofactor biosynthesis; adenosylcobalamin biosynthesis.</text>
</comment>
<comment type="similarity">
    <text evidence="1">Belongs to the CobB/CobQ family. CobQ subfamily.</text>
</comment>